<accession>Q06215</accession>
<organism>
    <name type="scientific">Vicia faba</name>
    <name type="common">Broad bean</name>
    <name type="synonym">Faba vulgaris</name>
    <dbReference type="NCBI Taxonomy" id="3906"/>
    <lineage>
        <taxon>Eukaryota</taxon>
        <taxon>Viridiplantae</taxon>
        <taxon>Streptophyta</taxon>
        <taxon>Embryophyta</taxon>
        <taxon>Tracheophyta</taxon>
        <taxon>Spermatophyta</taxon>
        <taxon>Magnoliopsida</taxon>
        <taxon>eudicotyledons</taxon>
        <taxon>Gunneridae</taxon>
        <taxon>Pentapetalae</taxon>
        <taxon>rosids</taxon>
        <taxon>fabids</taxon>
        <taxon>Fabales</taxon>
        <taxon>Fabaceae</taxon>
        <taxon>Papilionoideae</taxon>
        <taxon>50 kb inversion clade</taxon>
        <taxon>NPAAA clade</taxon>
        <taxon>Hologalegina</taxon>
        <taxon>IRL clade</taxon>
        <taxon>Fabeae</taxon>
        <taxon>Vicia</taxon>
    </lineage>
</organism>
<sequence>MTSISALSFISTINVSSNSKISHSSVYPFLQKQHQSSKLRKPKRQVTCSSNNNQNNPKEEQELSNIVGHRRNVLIGLGGIYGTLATNPSALASPISPPDLSKCVPPSDLPSGTTPPNINCCPPYSTKITDFKFPSNQPLRVRQAAHLVDNEFLEKYKKATELMKALPSNDPRNFTQQANIHCAYCDGAYSQIGFPDLKLQVHGSWLFFPFHRWYLYFYERILGSLINDPTFALPFWNYDAPDGMQLPTIYADKASPLYDELRNASHQPPTLIDLNFCDIGSDIDRNELIKTNLSIMYRQVYSNGKTSRLFLGNPYRAGDAEPQGAGSIENVPHAPVHTWTGDNTQTNIEDMGIFYSAARDPIFYSHHSNVDRLWYIWKTLGGKKHDFTDKDWLESGFLFYDENKNLVRVNVKDSLDIDKLGYAYQDVPIPWEKAKPVPRRTKVQKLVEVEVNDGNLRKSPTIFLVRQQSPRKYVTFPLVLNNKVSAIVKRPKKLRSKKEKEEEEEVLVIEGIEFYMNIAIKFDVYINDEDDKVGAGNTEFAGSFVNIPHSAHGHKNKKIITSLRLGITDLLEDLHVEGDDNIVVTLVPKCGSGQVKINNVEIVFED</sequence>
<reference key="1">
    <citation type="journal article" date="1992" name="Plant Mol. Biol.">
        <title>Cloning and characterization of cDNAs coding for Vicia faba polyphenol oxidase.</title>
        <authorList>
            <person name="Cary J.W."/>
            <person name="Lax A.R."/>
            <person name="Flurkey W.H."/>
        </authorList>
    </citation>
    <scope>NUCLEOTIDE SEQUENCE [MRNA]</scope>
    <scope>PARTIAL PROTEIN SEQUENCE</scope>
    <source>
        <tissue>Leaf</tissue>
    </source>
</reference>
<reference key="2">
    <citation type="journal article" date="1989" name="Plant Physiol.">
        <title>Polypeptide composition and amino-terminal sequence of broad bean polyphenol oxidase.</title>
        <authorList>
            <person name="Flurkey W.H."/>
        </authorList>
    </citation>
    <scope>PRELIMINARY PROTEIN SEQUENCE OF 93-119</scope>
    <source>
        <tissue>Leaf</tissue>
    </source>
</reference>
<evidence type="ECO:0000250" key="1">
    <source>
        <dbReference type="UniProtKB" id="Q9ZP19"/>
    </source>
</evidence>
<evidence type="ECO:0000256" key="2">
    <source>
        <dbReference type="SAM" id="MobiDB-lite"/>
    </source>
</evidence>
<evidence type="ECO:0000305" key="3"/>
<protein>
    <recommendedName>
        <fullName>Polyphenol oxidase A1, chloroplastic</fullName>
        <shortName>PPO</shortName>
        <ecNumber>1.10.3.1</ecNumber>
    </recommendedName>
    <alternativeName>
        <fullName>Catechol oxidase</fullName>
    </alternativeName>
</protein>
<name>PPO_VICFA</name>
<keyword id="KW-0150">Chloroplast</keyword>
<keyword id="KW-0186">Copper</keyword>
<keyword id="KW-0903">Direct protein sequencing</keyword>
<keyword id="KW-1015">Disulfide bond</keyword>
<keyword id="KW-0479">Metal-binding</keyword>
<keyword id="KW-0560">Oxidoreductase</keyword>
<keyword id="KW-0934">Plastid</keyword>
<keyword id="KW-0883">Thioether bond</keyword>
<keyword id="KW-0793">Thylakoid</keyword>
<keyword id="KW-0809">Transit peptide</keyword>
<comment type="function">
    <text>Catalyzes the oxidation of mono- and o-diphenols to o-diquinones.</text>
</comment>
<comment type="catalytic activity">
    <reaction>
        <text>2 catechol + O2 = 2 1,2-benzoquinone + 2 H2O</text>
        <dbReference type="Rhea" id="RHEA:21632"/>
        <dbReference type="ChEBI" id="CHEBI:15377"/>
        <dbReference type="ChEBI" id="CHEBI:15379"/>
        <dbReference type="ChEBI" id="CHEBI:17253"/>
        <dbReference type="ChEBI" id="CHEBI:18135"/>
        <dbReference type="EC" id="1.10.3.1"/>
    </reaction>
</comment>
<comment type="cofactor">
    <cofactor evidence="1">
        <name>Cu(2+)</name>
        <dbReference type="ChEBI" id="CHEBI:29036"/>
    </cofactor>
    <text evidence="1">Binds 2 copper ions per subunit.</text>
</comment>
<comment type="subcellular location">
    <subcellularLocation>
        <location>Plastid</location>
        <location>Chloroplast thylakoid lumen</location>
    </subcellularLocation>
</comment>
<comment type="similarity">
    <text evidence="3">Belongs to the tyrosinase family.</text>
</comment>
<feature type="transit peptide" description="Chloroplast">
    <location>
        <begin position="1"/>
        <end position="92"/>
    </location>
</feature>
<feature type="chain" id="PRO_0000035919" description="Polyphenol oxidase A1, chloroplastic">
    <location>
        <begin position="93"/>
        <end position="606"/>
    </location>
</feature>
<feature type="region of interest" description="Disordered" evidence="2">
    <location>
        <begin position="32"/>
        <end position="63"/>
    </location>
</feature>
<feature type="compositionally biased region" description="Basic residues" evidence="2">
    <location>
        <begin position="35"/>
        <end position="44"/>
    </location>
</feature>
<feature type="binding site" evidence="1">
    <location>
        <position position="181"/>
    </location>
    <ligand>
        <name>Cu cation</name>
        <dbReference type="ChEBI" id="CHEBI:23378"/>
        <label>A</label>
    </ligand>
</feature>
<feature type="binding site" evidence="1">
    <location>
        <position position="202"/>
    </location>
    <ligand>
        <name>Cu cation</name>
        <dbReference type="ChEBI" id="CHEBI:23378"/>
        <label>A</label>
    </ligand>
</feature>
<feature type="binding site" evidence="1">
    <location>
        <position position="211"/>
    </location>
    <ligand>
        <name>Cu cation</name>
        <dbReference type="ChEBI" id="CHEBI:23378"/>
        <label>A</label>
    </ligand>
</feature>
<feature type="binding site" evidence="1">
    <location>
        <position position="333"/>
    </location>
    <ligand>
        <name>Cu cation</name>
        <dbReference type="ChEBI" id="CHEBI:23378"/>
        <label>B</label>
    </ligand>
</feature>
<feature type="binding site" evidence="1">
    <location>
        <position position="337"/>
    </location>
    <ligand>
        <name>Cu cation</name>
        <dbReference type="ChEBI" id="CHEBI:23378"/>
        <label>B</label>
    </ligand>
</feature>
<feature type="binding site" evidence="1">
    <location>
        <position position="367"/>
    </location>
    <ligand>
        <name>Cu cation</name>
        <dbReference type="ChEBI" id="CHEBI:23378"/>
        <label>B</label>
    </ligand>
</feature>
<feature type="disulfide bond" evidence="1">
    <location>
        <begin position="103"/>
        <end position="121"/>
    </location>
</feature>
<feature type="disulfide bond" evidence="1">
    <location>
        <begin position="120"/>
        <end position="182"/>
    </location>
</feature>
<feature type="cross-link" description="2'-(S-cysteinyl)-histidine (Cys-His)" evidence="1">
    <location>
        <begin position="185"/>
        <end position="202"/>
    </location>
</feature>
<dbReference type="EC" id="1.10.3.1"/>
<dbReference type="EMBL" id="Z11702">
    <property type="protein sequence ID" value="CAA77764.1"/>
    <property type="molecule type" value="mRNA"/>
</dbReference>
<dbReference type="PIR" id="S24758">
    <property type="entry name" value="S24758"/>
</dbReference>
<dbReference type="SMR" id="Q06215"/>
<dbReference type="GO" id="GO:0009543">
    <property type="term" value="C:chloroplast thylakoid lumen"/>
    <property type="evidence" value="ECO:0007669"/>
    <property type="project" value="UniProtKB-SubCell"/>
</dbReference>
<dbReference type="GO" id="GO:0004097">
    <property type="term" value="F:catechol oxidase activity"/>
    <property type="evidence" value="ECO:0007669"/>
    <property type="project" value="UniProtKB-EC"/>
</dbReference>
<dbReference type="GO" id="GO:0046872">
    <property type="term" value="F:metal ion binding"/>
    <property type="evidence" value="ECO:0007669"/>
    <property type="project" value="UniProtKB-KW"/>
</dbReference>
<dbReference type="GO" id="GO:0046148">
    <property type="term" value="P:pigment biosynthetic process"/>
    <property type="evidence" value="ECO:0007669"/>
    <property type="project" value="InterPro"/>
</dbReference>
<dbReference type="FunFam" id="1.10.1280.10:FF:000007">
    <property type="entry name" value="Polyphenol oxidase, chloroplastic"/>
    <property type="match status" value="1"/>
</dbReference>
<dbReference type="Gene3D" id="1.10.1280.10">
    <property type="entry name" value="Di-copper center containing domain from catechol oxidase"/>
    <property type="match status" value="1"/>
</dbReference>
<dbReference type="InterPro" id="IPR008922">
    <property type="entry name" value="Di-copper_centre_dom_sf"/>
</dbReference>
<dbReference type="InterPro" id="IPR016213">
    <property type="entry name" value="Polyphenol_oxidase"/>
</dbReference>
<dbReference type="InterPro" id="IPR022740">
    <property type="entry name" value="Polyphenol_oxidase_C"/>
</dbReference>
<dbReference type="InterPro" id="IPR022739">
    <property type="entry name" value="Polyphenol_oxidase_cen"/>
</dbReference>
<dbReference type="InterPro" id="IPR050316">
    <property type="entry name" value="Tyrosinase/Hemocyanin"/>
</dbReference>
<dbReference type="InterPro" id="IPR002227">
    <property type="entry name" value="Tyrosinase_Cu-bd"/>
</dbReference>
<dbReference type="PANTHER" id="PTHR11474:SF76">
    <property type="entry name" value="SHKT DOMAIN-CONTAINING PROTEIN"/>
    <property type="match status" value="1"/>
</dbReference>
<dbReference type="PANTHER" id="PTHR11474">
    <property type="entry name" value="TYROSINASE FAMILY MEMBER"/>
    <property type="match status" value="1"/>
</dbReference>
<dbReference type="Pfam" id="PF12142">
    <property type="entry name" value="PPO1_DWL"/>
    <property type="match status" value="1"/>
</dbReference>
<dbReference type="Pfam" id="PF12143">
    <property type="entry name" value="PPO1_KFDV"/>
    <property type="match status" value="1"/>
</dbReference>
<dbReference type="Pfam" id="PF00264">
    <property type="entry name" value="Tyrosinase"/>
    <property type="match status" value="1"/>
</dbReference>
<dbReference type="PIRSF" id="PIRSF000290">
    <property type="entry name" value="PPO_plant"/>
    <property type="match status" value="1"/>
</dbReference>
<dbReference type="PRINTS" id="PR00092">
    <property type="entry name" value="TYROSINASE"/>
</dbReference>
<dbReference type="SUPFAM" id="SSF48056">
    <property type="entry name" value="Di-copper centre-containing domain"/>
    <property type="match status" value="1"/>
</dbReference>
<dbReference type="PROSITE" id="PS00497">
    <property type="entry name" value="TYROSINASE_1"/>
    <property type="match status" value="1"/>
</dbReference>
<dbReference type="PROSITE" id="PS00498">
    <property type="entry name" value="TYROSINASE_2"/>
    <property type="match status" value="1"/>
</dbReference>
<proteinExistence type="evidence at protein level"/>